<comment type="function">
    <text evidence="1">Vacuolar effluxer which mediate the efflux of amino acids resulting from autophagic degradation. The release of autophagic amino acids allows the maintenance of protein synthesis and viability during nitrogen starvation (By similarity).</text>
</comment>
<comment type="subcellular location">
    <subcellularLocation>
        <location evidence="1">Vacuole membrane</location>
        <topology evidence="1">Multi-pass membrane protein</topology>
    </subcellularLocation>
    <text evidence="1">Vacuole and punctate structures.</text>
</comment>
<comment type="similarity">
    <text evidence="4">Belongs to the ATG22 family.</text>
</comment>
<keyword id="KW-0029">Amino-acid transport</keyword>
<keyword id="KW-0072">Autophagy</keyword>
<keyword id="KW-0325">Glycoprotein</keyword>
<keyword id="KW-0472">Membrane</keyword>
<keyword id="KW-1185">Reference proteome</keyword>
<keyword id="KW-0812">Transmembrane</keyword>
<keyword id="KW-1133">Transmembrane helix</keyword>
<keyword id="KW-0813">Transport</keyword>
<keyword id="KW-0926">Vacuole</keyword>
<sequence>MEDGGSGLRAPRYPAEDTSPTTDRELRGFFCYGLAAEVFAVCAVGSFLPVTLEQLAREQGVLFTDKITPCTAKNATAIANATVNALMSRAEGPDTHQCIVNVFGTELTTASFAMYTFSASVFMQALALVSVSSVADHGTWRKKLLAGFGFTGSVSAMLFLLVVPQIFVVGSLLTVICVVCLGCSFVILNSYLPLLVLNHPVVQSDEDHSIGSSSVPLRPISPGQSNRKPRDTLHQGADKEVNVGSKADSSDLQLSTQISSKGVGIGYMAAVSVQVVCILILYFMNKMGVSSTLPLRTVLFFVGSWWLTFTIPSVMWLRDRPGPPLPTALYEGRAFVRTCMSYTIFAWKSLWKTVKVAVKLRQVLIFLVAWFLLSDAVATISATAILFARTELQMGTVAVAVLSIVATSSGIVGATVWPIISKRFSLRTNHIIVCCLLLLELVPLYGLLGFIPFVQAWGVGGLQKWYEIYPLGIIHGMVMGGLSSYCRSFYGLLIPPGSEAAFYALFAITDKGSSAVGPAIVGKIVDATGQIRPAFGFLAVLIALPIPLIWMVDVEKGQEDAIRMAGLMKTTDDGHEDFDSIEGSSDGHEAEGLMRDHD</sequence>
<proteinExistence type="inferred from homology"/>
<reference key="1">
    <citation type="journal article" date="2011" name="PLoS Genet.">
        <title>Genomic analysis of the necrotrophic fungal pathogens Sclerotinia sclerotiorum and Botrytis cinerea.</title>
        <authorList>
            <person name="Amselem J."/>
            <person name="Cuomo C.A."/>
            <person name="van Kan J.A.L."/>
            <person name="Viaud M."/>
            <person name="Benito E.P."/>
            <person name="Couloux A."/>
            <person name="Coutinho P.M."/>
            <person name="de Vries R.P."/>
            <person name="Dyer P.S."/>
            <person name="Fillinger S."/>
            <person name="Fournier E."/>
            <person name="Gout L."/>
            <person name="Hahn M."/>
            <person name="Kohn L."/>
            <person name="Lapalu N."/>
            <person name="Plummer K.M."/>
            <person name="Pradier J.-M."/>
            <person name="Quevillon E."/>
            <person name="Sharon A."/>
            <person name="Simon A."/>
            <person name="ten Have A."/>
            <person name="Tudzynski B."/>
            <person name="Tudzynski P."/>
            <person name="Wincker P."/>
            <person name="Andrew M."/>
            <person name="Anthouard V."/>
            <person name="Beever R.E."/>
            <person name="Beffa R."/>
            <person name="Benoit I."/>
            <person name="Bouzid O."/>
            <person name="Brault B."/>
            <person name="Chen Z."/>
            <person name="Choquer M."/>
            <person name="Collemare J."/>
            <person name="Cotton P."/>
            <person name="Danchin E.G."/>
            <person name="Da Silva C."/>
            <person name="Gautier A."/>
            <person name="Giraud C."/>
            <person name="Giraud T."/>
            <person name="Gonzalez C."/>
            <person name="Grossetete S."/>
            <person name="Gueldener U."/>
            <person name="Henrissat B."/>
            <person name="Howlett B.J."/>
            <person name="Kodira C."/>
            <person name="Kretschmer M."/>
            <person name="Lappartient A."/>
            <person name="Leroch M."/>
            <person name="Levis C."/>
            <person name="Mauceli E."/>
            <person name="Neuveglise C."/>
            <person name="Oeser B."/>
            <person name="Pearson M."/>
            <person name="Poulain J."/>
            <person name="Poussereau N."/>
            <person name="Quesneville H."/>
            <person name="Rascle C."/>
            <person name="Schumacher J."/>
            <person name="Segurens B."/>
            <person name="Sexton A."/>
            <person name="Silva E."/>
            <person name="Sirven C."/>
            <person name="Soanes D.M."/>
            <person name="Talbot N.J."/>
            <person name="Templeton M."/>
            <person name="Yandava C."/>
            <person name="Yarden O."/>
            <person name="Zeng Q."/>
            <person name="Rollins J.A."/>
            <person name="Lebrun M.-H."/>
            <person name="Dickman M."/>
        </authorList>
    </citation>
    <scope>NUCLEOTIDE SEQUENCE [LARGE SCALE GENOMIC DNA]</scope>
    <source>
        <strain>B05.10</strain>
    </source>
</reference>
<reference key="2">
    <citation type="journal article" date="2012" name="Eukaryot. Cell">
        <title>Genome update of Botrytis cinerea strains B05.10 and T4.</title>
        <authorList>
            <person name="Staats M."/>
            <person name="van Kan J.A.L."/>
        </authorList>
    </citation>
    <scope>NUCLEOTIDE SEQUENCE [LARGE SCALE GENOMIC DNA]</scope>
    <scope>GENOME REANNOTATION</scope>
    <source>
        <strain>B05.10</strain>
    </source>
</reference>
<reference key="3">
    <citation type="journal article" date="2017" name="Mol. Plant Pathol.">
        <title>A gapless genome sequence of the fungus Botrytis cinerea.</title>
        <authorList>
            <person name="van Kan J.A.L."/>
            <person name="Stassen J.H.M."/>
            <person name="Mosbach A."/>
            <person name="van der Lee T.A.J."/>
            <person name="Faino L."/>
            <person name="Farmer A.D."/>
            <person name="Papasotiriou D.G."/>
            <person name="Zhou S."/>
            <person name="Seidl M.F."/>
            <person name="Cottam E."/>
            <person name="Edel D."/>
            <person name="Hahn M."/>
            <person name="Schwartz D.C."/>
            <person name="Dietrich R.A."/>
            <person name="Widdison S."/>
            <person name="Scalliet G."/>
        </authorList>
    </citation>
    <scope>NUCLEOTIDE SEQUENCE [LARGE SCALE GENOMIC DNA]</scope>
    <scope>GENOME REANNOTATION</scope>
    <source>
        <strain>B05.10</strain>
    </source>
</reference>
<protein>
    <recommendedName>
        <fullName>Autophagy-related protein 22</fullName>
    </recommendedName>
</protein>
<dbReference type="EMBL" id="CP009811">
    <property type="protein sequence ID" value="ATZ52167.1"/>
    <property type="molecule type" value="Genomic_DNA"/>
</dbReference>
<dbReference type="RefSeq" id="XP_001545704.1">
    <property type="nucleotide sequence ID" value="XM_001545654.1"/>
</dbReference>
<dbReference type="GlyCosmos" id="A6SSM3">
    <property type="glycosylation" value="2 sites, No reported glycans"/>
</dbReference>
<dbReference type="EnsemblFungi" id="Bcin07g06620.1">
    <property type="protein sequence ID" value="Bcin07p06620.1"/>
    <property type="gene ID" value="Bcin07g06620"/>
</dbReference>
<dbReference type="GeneID" id="5426158"/>
<dbReference type="KEGG" id="bfu:BCIN_07g06620"/>
<dbReference type="VEuPathDB" id="FungiDB:Bcin07g06620"/>
<dbReference type="OMA" id="QPWEIFP"/>
<dbReference type="OrthoDB" id="192733at2759"/>
<dbReference type="Proteomes" id="UP000001798">
    <property type="component" value="Chromosome bcin07"/>
</dbReference>
<dbReference type="GO" id="GO:0005774">
    <property type="term" value="C:vacuolar membrane"/>
    <property type="evidence" value="ECO:0007669"/>
    <property type="project" value="UniProtKB-SubCell"/>
</dbReference>
<dbReference type="GO" id="GO:0032974">
    <property type="term" value="P:amino acid transmembrane export from vacuole"/>
    <property type="evidence" value="ECO:0007669"/>
    <property type="project" value="InterPro"/>
</dbReference>
<dbReference type="GO" id="GO:0006914">
    <property type="term" value="P:autophagy"/>
    <property type="evidence" value="ECO:0007669"/>
    <property type="project" value="UniProtKB-KW"/>
</dbReference>
<dbReference type="CDD" id="cd17483">
    <property type="entry name" value="MFS_Atg22_like"/>
    <property type="match status" value="1"/>
</dbReference>
<dbReference type="FunFam" id="1.20.1250.20:FF:000647">
    <property type="entry name" value="Autophagy-related protein"/>
    <property type="match status" value="1"/>
</dbReference>
<dbReference type="Gene3D" id="1.20.1250.20">
    <property type="entry name" value="MFS general substrate transporter like domains"/>
    <property type="match status" value="1"/>
</dbReference>
<dbReference type="InterPro" id="IPR044738">
    <property type="entry name" value="Atg22"/>
</dbReference>
<dbReference type="InterPro" id="IPR024671">
    <property type="entry name" value="Atg22-like"/>
</dbReference>
<dbReference type="InterPro" id="IPR050495">
    <property type="entry name" value="ATG22/LtaA_families"/>
</dbReference>
<dbReference type="InterPro" id="IPR036259">
    <property type="entry name" value="MFS_trans_sf"/>
</dbReference>
<dbReference type="PANTHER" id="PTHR23519">
    <property type="entry name" value="AUTOPHAGY-RELATED PROTEIN 22"/>
    <property type="match status" value="1"/>
</dbReference>
<dbReference type="PANTHER" id="PTHR23519:SF3">
    <property type="entry name" value="AUTOPHAGY-RELATED PROTEIN 22-2"/>
    <property type="match status" value="1"/>
</dbReference>
<dbReference type="Pfam" id="PF11700">
    <property type="entry name" value="ATG22"/>
    <property type="match status" value="1"/>
</dbReference>
<dbReference type="SUPFAM" id="SSF103473">
    <property type="entry name" value="MFS general substrate transporter"/>
    <property type="match status" value="1"/>
</dbReference>
<organism>
    <name type="scientific">Botryotinia fuckeliana (strain B05.10)</name>
    <name type="common">Noble rot fungus</name>
    <name type="synonym">Botrytis cinerea</name>
    <dbReference type="NCBI Taxonomy" id="332648"/>
    <lineage>
        <taxon>Eukaryota</taxon>
        <taxon>Fungi</taxon>
        <taxon>Dikarya</taxon>
        <taxon>Ascomycota</taxon>
        <taxon>Pezizomycotina</taxon>
        <taxon>Leotiomycetes</taxon>
        <taxon>Helotiales</taxon>
        <taxon>Sclerotiniaceae</taxon>
        <taxon>Botrytis</taxon>
    </lineage>
</organism>
<feature type="chain" id="PRO_0000318022" description="Autophagy-related protein 22">
    <location>
        <begin position="1"/>
        <end position="598"/>
    </location>
</feature>
<feature type="transmembrane region" description="Helical" evidence="2">
    <location>
        <begin position="28"/>
        <end position="48"/>
    </location>
</feature>
<feature type="transmembrane region" description="Helical" evidence="2">
    <location>
        <begin position="111"/>
        <end position="131"/>
    </location>
</feature>
<feature type="transmembrane region" description="Helical" evidence="2">
    <location>
        <begin position="159"/>
        <end position="179"/>
    </location>
</feature>
<feature type="transmembrane region" description="Helical" evidence="2">
    <location>
        <begin position="182"/>
        <end position="202"/>
    </location>
</feature>
<feature type="transmembrane region" description="Helical" evidence="2">
    <location>
        <begin position="263"/>
        <end position="283"/>
    </location>
</feature>
<feature type="transmembrane region" description="Helical" evidence="2">
    <location>
        <begin position="297"/>
        <end position="317"/>
    </location>
</feature>
<feature type="transmembrane region" description="Helical" evidence="2">
    <location>
        <begin position="363"/>
        <end position="383"/>
    </location>
</feature>
<feature type="transmembrane region" description="Helical" evidence="2">
    <location>
        <begin position="400"/>
        <end position="420"/>
    </location>
</feature>
<feature type="transmembrane region" description="Helical" evidence="2">
    <location>
        <begin position="431"/>
        <end position="451"/>
    </location>
</feature>
<feature type="transmembrane region" description="Helical" evidence="2">
    <location>
        <begin position="465"/>
        <end position="485"/>
    </location>
</feature>
<feature type="transmembrane region" description="Helical" evidence="2">
    <location>
        <begin position="489"/>
        <end position="509"/>
    </location>
</feature>
<feature type="transmembrane region" description="Helical" evidence="2">
    <location>
        <begin position="534"/>
        <end position="554"/>
    </location>
</feature>
<feature type="region of interest" description="Disordered" evidence="3">
    <location>
        <begin position="1"/>
        <end position="20"/>
    </location>
</feature>
<feature type="region of interest" description="Disordered" evidence="3">
    <location>
        <begin position="209"/>
        <end position="237"/>
    </location>
</feature>
<feature type="region of interest" description="Disordered" evidence="3">
    <location>
        <begin position="573"/>
        <end position="598"/>
    </location>
</feature>
<feature type="compositionally biased region" description="Basic and acidic residues" evidence="3">
    <location>
        <begin position="228"/>
        <end position="237"/>
    </location>
</feature>
<feature type="compositionally biased region" description="Basic and acidic residues" evidence="3">
    <location>
        <begin position="585"/>
        <end position="598"/>
    </location>
</feature>
<feature type="glycosylation site" description="N-linked (GlcNAc...) asparagine" evidence="2">
    <location>
        <position position="74"/>
    </location>
</feature>
<feature type="glycosylation site" description="N-linked (GlcNAc...) asparagine" evidence="2">
    <location>
        <position position="80"/>
    </location>
</feature>
<evidence type="ECO:0000250" key="1"/>
<evidence type="ECO:0000255" key="2"/>
<evidence type="ECO:0000256" key="3">
    <source>
        <dbReference type="SAM" id="MobiDB-lite"/>
    </source>
</evidence>
<evidence type="ECO:0000305" key="4"/>
<gene>
    <name type="primary">atg22</name>
    <name type="ORF">BC1G_15782</name>
    <name type="ORF">BCIN_07g06620</name>
</gene>
<accession>A6SSM3</accession>
<accession>A0A384JP56</accession>
<name>AT221_BOTFB</name>